<gene>
    <name type="primary">SLC20A2</name>
    <name type="synonym">GLVR2</name>
    <name type="synonym">PIT2</name>
</gene>
<evidence type="ECO:0000250" key="1">
    <source>
        <dbReference type="UniProtKB" id="Q63488"/>
    </source>
</evidence>
<evidence type="ECO:0000250" key="2">
    <source>
        <dbReference type="UniProtKB" id="Q80UP8"/>
    </source>
</evidence>
<evidence type="ECO:0000255" key="3"/>
<evidence type="ECO:0000256" key="4">
    <source>
        <dbReference type="SAM" id="MobiDB-lite"/>
    </source>
</evidence>
<evidence type="ECO:0000269" key="5">
    <source>
    </source>
</evidence>
<evidence type="ECO:0000269" key="6">
    <source>
    </source>
</evidence>
<evidence type="ECO:0000269" key="7">
    <source>
    </source>
</evidence>
<evidence type="ECO:0000269" key="8">
    <source>
    </source>
</evidence>
<evidence type="ECO:0000269" key="9">
    <source>
    </source>
</evidence>
<evidence type="ECO:0000269" key="10">
    <source>
    </source>
</evidence>
<evidence type="ECO:0000269" key="11">
    <source>
    </source>
</evidence>
<evidence type="ECO:0000269" key="12">
    <source>
    </source>
</evidence>
<evidence type="ECO:0000269" key="13">
    <source>
    </source>
</evidence>
<evidence type="ECO:0000269" key="14">
    <source>
    </source>
</evidence>
<evidence type="ECO:0000269" key="15">
    <source>
    </source>
</evidence>
<evidence type="ECO:0000269" key="16">
    <source>
    </source>
</evidence>
<evidence type="ECO:0000269" key="17">
    <source>
    </source>
</evidence>
<evidence type="ECO:0000269" key="18">
    <source>
    </source>
</evidence>
<evidence type="ECO:0000269" key="19">
    <source>
    </source>
</evidence>
<evidence type="ECO:0000269" key="20">
    <source>
    </source>
</evidence>
<evidence type="ECO:0000269" key="21">
    <source>
    </source>
</evidence>
<evidence type="ECO:0000305" key="22"/>
<evidence type="ECO:0007744" key="23">
    <source>
    </source>
</evidence>
<evidence type="ECO:0007744" key="24">
    <source>
    </source>
</evidence>
<evidence type="ECO:0007744" key="25">
    <source>
    </source>
</evidence>
<organism>
    <name type="scientific">Homo sapiens</name>
    <name type="common">Human</name>
    <dbReference type="NCBI Taxonomy" id="9606"/>
    <lineage>
        <taxon>Eukaryota</taxon>
        <taxon>Metazoa</taxon>
        <taxon>Chordata</taxon>
        <taxon>Craniata</taxon>
        <taxon>Vertebrata</taxon>
        <taxon>Euteleostomi</taxon>
        <taxon>Mammalia</taxon>
        <taxon>Eutheria</taxon>
        <taxon>Euarchontoglires</taxon>
        <taxon>Primates</taxon>
        <taxon>Haplorrhini</taxon>
        <taxon>Catarrhini</taxon>
        <taxon>Hominidae</taxon>
        <taxon>Homo</taxon>
    </lineage>
</organism>
<dbReference type="EMBL" id="L20852">
    <property type="protein sequence ID" value="AAA18018.1"/>
    <property type="molecule type" value="mRNA"/>
</dbReference>
<dbReference type="EMBL" id="AK291202">
    <property type="protein sequence ID" value="BAF83891.1"/>
    <property type="molecule type" value="mRNA"/>
</dbReference>
<dbReference type="EMBL" id="BC028600">
    <property type="protein sequence ID" value="AAH28600.1"/>
    <property type="molecule type" value="mRNA"/>
</dbReference>
<dbReference type="CCDS" id="CCDS6132.1"/>
<dbReference type="PIR" id="A37000">
    <property type="entry name" value="A37000"/>
</dbReference>
<dbReference type="RefSeq" id="NP_001244109.1">
    <property type="nucleotide sequence ID" value="NM_001257180.2"/>
</dbReference>
<dbReference type="RefSeq" id="NP_001244110.1">
    <property type="nucleotide sequence ID" value="NM_001257181.2"/>
</dbReference>
<dbReference type="RefSeq" id="NP_006740.1">
    <property type="nucleotide sequence ID" value="NM_006749.5"/>
</dbReference>
<dbReference type="RefSeq" id="XP_005273670.1">
    <property type="nucleotide sequence ID" value="XM_005273613.4"/>
</dbReference>
<dbReference type="RefSeq" id="XP_016869237.1">
    <property type="nucleotide sequence ID" value="XM_017013748.2"/>
</dbReference>
<dbReference type="RefSeq" id="XP_024303003.1">
    <property type="nucleotide sequence ID" value="XM_024447235.2"/>
</dbReference>
<dbReference type="RefSeq" id="XP_024303004.1">
    <property type="nucleotide sequence ID" value="XM_024447236.2"/>
</dbReference>
<dbReference type="RefSeq" id="XP_047278076.1">
    <property type="nucleotide sequence ID" value="XM_047422120.1"/>
</dbReference>
<dbReference type="RefSeq" id="XP_047278077.1">
    <property type="nucleotide sequence ID" value="XM_047422121.1"/>
</dbReference>
<dbReference type="RefSeq" id="XP_047278078.1">
    <property type="nucleotide sequence ID" value="XM_047422122.1"/>
</dbReference>
<dbReference type="RefSeq" id="XP_054217019.1">
    <property type="nucleotide sequence ID" value="XM_054361044.1"/>
</dbReference>
<dbReference type="RefSeq" id="XP_054217020.1">
    <property type="nucleotide sequence ID" value="XM_054361045.1"/>
</dbReference>
<dbReference type="RefSeq" id="XP_054217021.1">
    <property type="nucleotide sequence ID" value="XM_054361046.1"/>
</dbReference>
<dbReference type="RefSeq" id="XP_054217022.1">
    <property type="nucleotide sequence ID" value="XM_054361047.1"/>
</dbReference>
<dbReference type="RefSeq" id="XP_054217023.1">
    <property type="nucleotide sequence ID" value="XM_054361048.1"/>
</dbReference>
<dbReference type="RefSeq" id="XP_054217024.1">
    <property type="nucleotide sequence ID" value="XM_054361049.1"/>
</dbReference>
<dbReference type="RefSeq" id="XP_054217025.1">
    <property type="nucleotide sequence ID" value="XM_054361050.1"/>
</dbReference>
<dbReference type="SMR" id="Q08357"/>
<dbReference type="BioGRID" id="112463">
    <property type="interactions" value="77"/>
</dbReference>
<dbReference type="FunCoup" id="Q08357">
    <property type="interactions" value="652"/>
</dbReference>
<dbReference type="IntAct" id="Q08357">
    <property type="interactions" value="28"/>
</dbReference>
<dbReference type="MINT" id="Q08357"/>
<dbReference type="STRING" id="9606.ENSP00000429754"/>
<dbReference type="BindingDB" id="Q08357"/>
<dbReference type="ChEMBL" id="CHEMBL4295806"/>
<dbReference type="DrugBank" id="DB11348">
    <property type="generic name" value="Calcium Phosphate"/>
</dbReference>
<dbReference type="DrugBank" id="DB14481">
    <property type="generic name" value="Calcium phosphate dihydrate"/>
</dbReference>
<dbReference type="DrugBank" id="DB14502">
    <property type="generic name" value="Sodium phosphate, dibasic"/>
</dbReference>
<dbReference type="DrugBank" id="DB09449">
    <property type="generic name" value="Sodium phosphate, monobasic"/>
</dbReference>
<dbReference type="DrugBank" id="DB14503">
    <property type="generic name" value="Sodium phosphate, monobasic, unspecified form"/>
</dbReference>
<dbReference type="DrugBank" id="DB09436">
    <property type="generic name" value="Technetium Tc-99m succimer"/>
</dbReference>
<dbReference type="TCDB" id="2.A.20.2.3">
    <property type="family name" value="the inorganic phosphate transporter (pit) family"/>
</dbReference>
<dbReference type="GlyCosmos" id="Q08357">
    <property type="glycosylation" value="1 site, No reported glycans"/>
</dbReference>
<dbReference type="GlyGen" id="Q08357">
    <property type="glycosylation" value="3 sites, 1 N-linked glycan (1 site)"/>
</dbReference>
<dbReference type="iPTMnet" id="Q08357"/>
<dbReference type="PhosphoSitePlus" id="Q08357"/>
<dbReference type="BioMuta" id="SLC20A2"/>
<dbReference type="DMDM" id="74735615"/>
<dbReference type="jPOST" id="Q08357"/>
<dbReference type="MassIVE" id="Q08357"/>
<dbReference type="PaxDb" id="9606-ENSP00000340465"/>
<dbReference type="PeptideAtlas" id="Q08357"/>
<dbReference type="ProteomicsDB" id="58600"/>
<dbReference type="Pumba" id="Q08357"/>
<dbReference type="Antibodypedia" id="11470">
    <property type="antibodies" value="155 antibodies from 28 providers"/>
</dbReference>
<dbReference type="DNASU" id="6575"/>
<dbReference type="Ensembl" id="ENST00000342228.7">
    <property type="protein sequence ID" value="ENSP00000340465.3"/>
    <property type="gene ID" value="ENSG00000168575.11"/>
</dbReference>
<dbReference type="Ensembl" id="ENST00000517366.2">
    <property type="protein sequence ID" value="ENSP00000427756.2"/>
    <property type="gene ID" value="ENSG00000168575.11"/>
</dbReference>
<dbReference type="Ensembl" id="ENST00000518384.2">
    <property type="protein sequence ID" value="ENSP00000430462.2"/>
    <property type="gene ID" value="ENSG00000168575.11"/>
</dbReference>
<dbReference type="Ensembl" id="ENST00000518717.2">
    <property type="protein sequence ID" value="ENSP00000430166.2"/>
    <property type="gene ID" value="ENSG00000168575.11"/>
</dbReference>
<dbReference type="Ensembl" id="ENST00000520179.5">
    <property type="protein sequence ID" value="ENSP00000429712.1"/>
    <property type="gene ID" value="ENSG00000168575.11"/>
</dbReference>
<dbReference type="Ensembl" id="ENST00000520262.6">
    <property type="protein sequence ID" value="ENSP00000429754.1"/>
    <property type="gene ID" value="ENSG00000168575.11"/>
</dbReference>
<dbReference type="Ensembl" id="ENST00000713988.1">
    <property type="protein sequence ID" value="ENSP00000519279.1"/>
    <property type="gene ID" value="ENSG00000168575.11"/>
</dbReference>
<dbReference type="GeneID" id="6575"/>
<dbReference type="KEGG" id="hsa:6575"/>
<dbReference type="MANE-Select" id="ENST00000520262.6">
    <property type="protein sequence ID" value="ENSP00000429754.1"/>
    <property type="RefSeq nucleotide sequence ID" value="NM_001257180.2"/>
    <property type="RefSeq protein sequence ID" value="NP_001244109.1"/>
</dbReference>
<dbReference type="UCSC" id="uc003xpe.5">
    <property type="organism name" value="human"/>
</dbReference>
<dbReference type="AGR" id="HGNC:10947"/>
<dbReference type="CTD" id="6575"/>
<dbReference type="DisGeNET" id="6575"/>
<dbReference type="GeneCards" id="SLC20A2"/>
<dbReference type="GeneReviews" id="SLC20A2"/>
<dbReference type="HGNC" id="HGNC:10947">
    <property type="gene designation" value="SLC20A2"/>
</dbReference>
<dbReference type="HPA" id="ENSG00000168575">
    <property type="expression patterns" value="Tissue enhanced (choroid plexus, skeletal muscle)"/>
</dbReference>
<dbReference type="MalaCards" id="SLC20A2"/>
<dbReference type="MIM" id="158378">
    <property type="type" value="gene"/>
</dbReference>
<dbReference type="MIM" id="213600">
    <property type="type" value="phenotype"/>
</dbReference>
<dbReference type="neXtProt" id="NX_Q08357"/>
<dbReference type="OpenTargets" id="ENSG00000168575"/>
<dbReference type="Orphanet" id="1980">
    <property type="disease" value="Bilateral striopallidodentate calcinosis"/>
</dbReference>
<dbReference type="PharmGKB" id="PA35834"/>
<dbReference type="VEuPathDB" id="HostDB:ENSG00000168575"/>
<dbReference type="eggNOG" id="KOG2493">
    <property type="taxonomic scope" value="Eukaryota"/>
</dbReference>
<dbReference type="GeneTree" id="ENSGT00390000014879"/>
<dbReference type="HOGENOM" id="CLU_015355_3_1_1"/>
<dbReference type="InParanoid" id="Q08357"/>
<dbReference type="OMA" id="MQAFCIA"/>
<dbReference type="OrthoDB" id="260807at2759"/>
<dbReference type="PAN-GO" id="Q08357">
    <property type="GO annotations" value="2 GO annotations based on evolutionary models"/>
</dbReference>
<dbReference type="PhylomeDB" id="Q08357"/>
<dbReference type="TreeFam" id="TF314426"/>
<dbReference type="BioCyc" id="MetaCyc:ENSG00000168575-MONOMER"/>
<dbReference type="PathwayCommons" id="Q08357"/>
<dbReference type="Reactome" id="R-HSA-427652">
    <property type="pathway name" value="Sodium-coupled phosphate cotransporters"/>
</dbReference>
<dbReference type="Reactome" id="R-HSA-5619111">
    <property type="pathway name" value="Defective SLC20A2 causes idiopathic basal ganglia calcification 1 (IBGC1)"/>
</dbReference>
<dbReference type="SignaLink" id="Q08357"/>
<dbReference type="SIGNOR" id="Q08357"/>
<dbReference type="BioGRID-ORCS" id="6575">
    <property type="hits" value="14 hits in 1159 CRISPR screens"/>
</dbReference>
<dbReference type="ChiTaRS" id="SLC20A2">
    <property type="organism name" value="human"/>
</dbReference>
<dbReference type="GeneWiki" id="SLC20A2"/>
<dbReference type="GenomeRNAi" id="6575"/>
<dbReference type="Pharos" id="Q08357">
    <property type="development level" value="Tbio"/>
</dbReference>
<dbReference type="PRO" id="PR:Q08357"/>
<dbReference type="Proteomes" id="UP000005640">
    <property type="component" value="Chromosome 8"/>
</dbReference>
<dbReference type="RNAct" id="Q08357">
    <property type="molecule type" value="protein"/>
</dbReference>
<dbReference type="Bgee" id="ENSG00000168575">
    <property type="expression patterns" value="Expressed in left lobe of thyroid gland and 198 other cell types or tissues"/>
</dbReference>
<dbReference type="ExpressionAtlas" id="Q08357">
    <property type="expression patterns" value="baseline and differential"/>
</dbReference>
<dbReference type="GO" id="GO:0016324">
    <property type="term" value="C:apical plasma membrane"/>
    <property type="evidence" value="ECO:0000250"/>
    <property type="project" value="UniProtKB"/>
</dbReference>
<dbReference type="GO" id="GO:0031526">
    <property type="term" value="C:brush border membrane"/>
    <property type="evidence" value="ECO:0000250"/>
    <property type="project" value="UniProtKB"/>
</dbReference>
<dbReference type="GO" id="GO:0070062">
    <property type="term" value="C:extracellular exosome"/>
    <property type="evidence" value="ECO:0007005"/>
    <property type="project" value="UniProtKB"/>
</dbReference>
<dbReference type="GO" id="GO:0016020">
    <property type="term" value="C:membrane"/>
    <property type="evidence" value="ECO:0000304"/>
    <property type="project" value="ProtInc"/>
</dbReference>
<dbReference type="GO" id="GO:0005886">
    <property type="term" value="C:plasma membrane"/>
    <property type="evidence" value="ECO:0000315"/>
    <property type="project" value="UniProtKB"/>
</dbReference>
<dbReference type="GO" id="GO:0005315">
    <property type="term" value="F:phosphate transmembrane transporter activity"/>
    <property type="evidence" value="ECO:0000318"/>
    <property type="project" value="GO_Central"/>
</dbReference>
<dbReference type="GO" id="GO:0038023">
    <property type="term" value="F:signaling receptor activity"/>
    <property type="evidence" value="ECO:0000304"/>
    <property type="project" value="ProtInc"/>
</dbReference>
<dbReference type="GO" id="GO:0005436">
    <property type="term" value="F:sodium:phosphate symporter activity"/>
    <property type="evidence" value="ECO:0000314"/>
    <property type="project" value="UniProtKB"/>
</dbReference>
<dbReference type="GO" id="GO:0001618">
    <property type="term" value="F:virus receptor activity"/>
    <property type="evidence" value="ECO:0000315"/>
    <property type="project" value="UniProtKB"/>
</dbReference>
<dbReference type="GO" id="GO:0006811">
    <property type="term" value="P:monoatomic ion transport"/>
    <property type="evidence" value="ECO:0000304"/>
    <property type="project" value="Reactome"/>
</dbReference>
<dbReference type="GO" id="GO:0035435">
    <property type="term" value="P:phosphate ion transmembrane transport"/>
    <property type="evidence" value="ECO:0000318"/>
    <property type="project" value="GO_Central"/>
</dbReference>
<dbReference type="GO" id="GO:0030501">
    <property type="term" value="P:positive regulation of bone mineralization"/>
    <property type="evidence" value="ECO:0000250"/>
    <property type="project" value="UniProtKB"/>
</dbReference>
<dbReference type="InterPro" id="IPR001204">
    <property type="entry name" value="Phos_transporter"/>
</dbReference>
<dbReference type="PANTHER" id="PTHR11101">
    <property type="entry name" value="PHOSPHATE TRANSPORTER"/>
    <property type="match status" value="1"/>
</dbReference>
<dbReference type="PANTHER" id="PTHR11101:SF83">
    <property type="entry name" value="SODIUM-DEPENDENT PHOSPHATE TRANSPORTER 2"/>
    <property type="match status" value="1"/>
</dbReference>
<dbReference type="Pfam" id="PF01384">
    <property type="entry name" value="PHO4"/>
    <property type="match status" value="1"/>
</dbReference>
<reference key="1">
    <citation type="journal article" date="1994" name="Proc. Natl. Acad. Sci. U.S.A.">
        <title>A human amphotropic retrovirus receptor is a second member of the gibbon ape leukemia virus receptor family.</title>
        <authorList>
            <person name="van Zeijl M."/>
            <person name="Johann S.V."/>
            <person name="Closs E."/>
            <person name="Cunningham J."/>
            <person name="Eddy R."/>
            <person name="Shows T.B."/>
            <person name="O'Hara B."/>
        </authorList>
    </citation>
    <scope>NUCLEOTIDE SEQUENCE [MRNA]</scope>
    <scope>FUNCTION AS RETROVIRAL RECEPTOR (MICROBIAL FUNCTION)</scope>
    <source>
        <tissue>Placenta</tissue>
    </source>
</reference>
<reference key="2">
    <citation type="journal article" date="2004" name="Nat. Genet.">
        <title>Complete sequencing and characterization of 21,243 full-length human cDNAs.</title>
        <authorList>
            <person name="Ota T."/>
            <person name="Suzuki Y."/>
            <person name="Nishikawa T."/>
            <person name="Otsuki T."/>
            <person name="Sugiyama T."/>
            <person name="Irie R."/>
            <person name="Wakamatsu A."/>
            <person name="Hayashi K."/>
            <person name="Sato H."/>
            <person name="Nagai K."/>
            <person name="Kimura K."/>
            <person name="Makita H."/>
            <person name="Sekine M."/>
            <person name="Obayashi M."/>
            <person name="Nishi T."/>
            <person name="Shibahara T."/>
            <person name="Tanaka T."/>
            <person name="Ishii S."/>
            <person name="Yamamoto J."/>
            <person name="Saito K."/>
            <person name="Kawai Y."/>
            <person name="Isono Y."/>
            <person name="Nakamura Y."/>
            <person name="Nagahari K."/>
            <person name="Murakami K."/>
            <person name="Yasuda T."/>
            <person name="Iwayanagi T."/>
            <person name="Wagatsuma M."/>
            <person name="Shiratori A."/>
            <person name="Sudo H."/>
            <person name="Hosoiri T."/>
            <person name="Kaku Y."/>
            <person name="Kodaira H."/>
            <person name="Kondo H."/>
            <person name="Sugawara M."/>
            <person name="Takahashi M."/>
            <person name="Kanda K."/>
            <person name="Yokoi T."/>
            <person name="Furuya T."/>
            <person name="Kikkawa E."/>
            <person name="Omura Y."/>
            <person name="Abe K."/>
            <person name="Kamihara K."/>
            <person name="Katsuta N."/>
            <person name="Sato K."/>
            <person name="Tanikawa M."/>
            <person name="Yamazaki M."/>
            <person name="Ninomiya K."/>
            <person name="Ishibashi T."/>
            <person name="Yamashita H."/>
            <person name="Murakawa K."/>
            <person name="Fujimori K."/>
            <person name="Tanai H."/>
            <person name="Kimata M."/>
            <person name="Watanabe M."/>
            <person name="Hiraoka S."/>
            <person name="Chiba Y."/>
            <person name="Ishida S."/>
            <person name="Ono Y."/>
            <person name="Takiguchi S."/>
            <person name="Watanabe S."/>
            <person name="Yosida M."/>
            <person name="Hotuta T."/>
            <person name="Kusano J."/>
            <person name="Kanehori K."/>
            <person name="Takahashi-Fujii A."/>
            <person name="Hara H."/>
            <person name="Tanase T.-O."/>
            <person name="Nomura Y."/>
            <person name="Togiya S."/>
            <person name="Komai F."/>
            <person name="Hara R."/>
            <person name="Takeuchi K."/>
            <person name="Arita M."/>
            <person name="Imose N."/>
            <person name="Musashino K."/>
            <person name="Yuuki H."/>
            <person name="Oshima A."/>
            <person name="Sasaki N."/>
            <person name="Aotsuka S."/>
            <person name="Yoshikawa Y."/>
            <person name="Matsunawa H."/>
            <person name="Ichihara T."/>
            <person name="Shiohata N."/>
            <person name="Sano S."/>
            <person name="Moriya S."/>
            <person name="Momiyama H."/>
            <person name="Satoh N."/>
            <person name="Takami S."/>
            <person name="Terashima Y."/>
            <person name="Suzuki O."/>
            <person name="Nakagawa S."/>
            <person name="Senoh A."/>
            <person name="Mizoguchi H."/>
            <person name="Goto Y."/>
            <person name="Shimizu F."/>
            <person name="Wakebe H."/>
            <person name="Hishigaki H."/>
            <person name="Watanabe T."/>
            <person name="Sugiyama A."/>
            <person name="Takemoto M."/>
            <person name="Kawakami B."/>
            <person name="Yamazaki M."/>
            <person name="Watanabe K."/>
            <person name="Kumagai A."/>
            <person name="Itakura S."/>
            <person name="Fukuzumi Y."/>
            <person name="Fujimori Y."/>
            <person name="Komiyama M."/>
            <person name="Tashiro H."/>
            <person name="Tanigami A."/>
            <person name="Fujiwara T."/>
            <person name="Ono T."/>
            <person name="Yamada K."/>
            <person name="Fujii Y."/>
            <person name="Ozaki K."/>
            <person name="Hirao M."/>
            <person name="Ohmori Y."/>
            <person name="Kawabata A."/>
            <person name="Hikiji T."/>
            <person name="Kobatake N."/>
            <person name="Inagaki H."/>
            <person name="Ikema Y."/>
            <person name="Okamoto S."/>
            <person name="Okitani R."/>
            <person name="Kawakami T."/>
            <person name="Noguchi S."/>
            <person name="Itoh T."/>
            <person name="Shigeta K."/>
            <person name="Senba T."/>
            <person name="Matsumura K."/>
            <person name="Nakajima Y."/>
            <person name="Mizuno T."/>
            <person name="Morinaga M."/>
            <person name="Sasaki M."/>
            <person name="Togashi T."/>
            <person name="Oyama M."/>
            <person name="Hata H."/>
            <person name="Watanabe M."/>
            <person name="Komatsu T."/>
            <person name="Mizushima-Sugano J."/>
            <person name="Satoh T."/>
            <person name="Shirai Y."/>
            <person name="Takahashi Y."/>
            <person name="Nakagawa K."/>
            <person name="Okumura K."/>
            <person name="Nagase T."/>
            <person name="Nomura N."/>
            <person name="Kikuchi H."/>
            <person name="Masuho Y."/>
            <person name="Yamashita R."/>
            <person name="Nakai K."/>
            <person name="Yada T."/>
            <person name="Nakamura Y."/>
            <person name="Ohara O."/>
            <person name="Isogai T."/>
            <person name="Sugano S."/>
        </authorList>
    </citation>
    <scope>NUCLEOTIDE SEQUENCE [LARGE SCALE MRNA]</scope>
</reference>
<reference key="3">
    <citation type="journal article" date="2004" name="Genome Res.">
        <title>The status, quality, and expansion of the NIH full-length cDNA project: the Mammalian Gene Collection (MGC).</title>
        <authorList>
            <consortium name="The MGC Project Team"/>
        </authorList>
    </citation>
    <scope>NUCLEOTIDE SEQUENCE [LARGE SCALE MRNA]</scope>
    <source>
        <tissue>Brain</tissue>
    </source>
</reference>
<reference key="4">
    <citation type="journal article" date="2001" name="J. Virol.">
        <title>Transmembrane topology of PiT-2, a phosphate transporter-retrovirus receptor.</title>
        <authorList>
            <person name="Salauen C."/>
            <person name="Rodrigues P."/>
            <person name="Heard J.M."/>
        </authorList>
    </citation>
    <scope>TOPOLOGY</scope>
    <scope>GLYCOSYLATION AT ASN-81</scope>
    <scope>MUTAGENESIS OF ASN-81</scope>
</reference>
<reference key="5">
    <citation type="journal article" date="1997" name="J. Virol.">
        <title>The amphotropic murine leukemia virus receptor gene encodes a 71-kilodalton protein that is induced by phosphate depletion.</title>
        <authorList>
            <person name="Chien M.L."/>
            <person name="Foster J.L."/>
            <person name="Douglas J.L."/>
            <person name="Garcia J.V."/>
        </authorList>
    </citation>
    <scope>TOPOLOGY</scope>
    <scope>SUBCELLULAR LOCATION</scope>
    <scope>INDUCTION</scope>
</reference>
<reference key="6">
    <citation type="journal article" date="2001" name="J. Virol.">
        <title>Identification of envelope determinants of feline leukemia virus subgroup B that permit infection and gene transfer to cells expressing human Pit1 or Pit2.</title>
        <authorList>
            <person name="Sugai J."/>
            <person name="Eiden M."/>
            <person name="Anderson M.M."/>
            <person name="Van Hoeven N."/>
            <person name="Meiering C.D."/>
            <person name="Overbaugh J."/>
        </authorList>
    </citation>
    <scope>FUNCTION AS RETROVIRAL RECEPTOR (MICROBIAL FUNCTION)</scope>
</reference>
<reference key="7">
    <citation type="journal article" date="2002" name="J. Biol. Chem.">
        <title>Two highly conserved glutamate residues critical for type III sodium-dependent phosphate transport revealed by uncoupling transport function from retroviral receptor function.</title>
        <authorList>
            <person name="Boettger P."/>
            <person name="Pedersen L."/>
        </authorList>
    </citation>
    <scope>FUNCTION AS SODIUM-PHOSPHATE SYMPORTER</scope>
    <scope>FUNCTION AS RETROVIRAL RECEPTOR (MICROBIAL FUNCTION)</scope>
    <scope>SUBUNIT</scope>
    <scope>MUTAGENESIS OF GLU-55 AND GLU-575</scope>
    <scope>TRANSPORTER ACTIVITY</scope>
</reference>
<reference key="8">
    <citation type="journal article" date="2005" name="FEBS J.">
        <title>Evolutionary and experimental analyses of inorganic phosphate transporter PiT family reveals two related signature sequences harboring highly conserved aspartic acids critical for sodium-dependent phosphate transport function of human PiT2.</title>
        <authorList>
            <person name="Boettger P."/>
            <person name="Pedersen L."/>
        </authorList>
    </citation>
    <scope>FUNCTION AS SODIUM-PHOSPHATE SYMPORTER</scope>
    <scope>FUNCTION AS RETROVIRAL RECEPTOR (MICROBIAL FUNCTION)</scope>
    <scope>SUBUNIT</scope>
    <scope>MUTAGENESIS OF ASP-506</scope>
    <scope>CHARACTERIZATION OF VARIANT IBGC1 ASN-28</scope>
    <scope>TRANSPORTER ACTIVITY</scope>
</reference>
<reference key="9">
    <citation type="journal article" date="2006" name="Am. J. Physiol.">
        <title>Characterization of transport mechanisms and determinants critical for Na+-dependent Pi symport of the PiT family paralogs human PiT1 and PiT2.</title>
        <authorList>
            <person name="Boettger P."/>
            <person name="Hede S.E."/>
            <person name="Grunnet M."/>
            <person name="Hoyer B."/>
            <person name="Klaerke D.A."/>
            <person name="Pedersen L."/>
        </authorList>
    </citation>
    <scope>FUNCTION AS SODIUM-PHOSPHATE SYMPORTER</scope>
    <scope>BIOPHYSICOCHEMICAL PROPERTIES</scope>
    <scope>MUTAGENESIS OF GLU-55; GLU-91 AND GLU-575</scope>
    <scope>TRANSPORTER ACTIVITY</scope>
</reference>
<reference key="10">
    <citation type="journal article" date="2007" name="Am. J. Physiol.">
        <title>Deciphering PiT transport kinetics and substrate specificity using electrophysiology and flux measurements.</title>
        <authorList>
            <person name="Ravera S."/>
            <person name="Virkki L.V."/>
            <person name="Murer H."/>
            <person name="Forster I.C."/>
        </authorList>
    </citation>
    <scope>FUNCTION AS SODIUM-PHOSPHATE SYMPORTER</scope>
    <scope>TRANSPORTER ACTIVITY</scope>
    <scope>STOICHIOMETRY</scope>
</reference>
<reference key="11">
    <citation type="journal article" date="2009" name="Anal. Chem.">
        <title>Lys-N and trypsin cover complementary parts of the phosphoproteome in a refined SCX-based approach.</title>
        <authorList>
            <person name="Gauci S."/>
            <person name="Helbig A.O."/>
            <person name="Slijper M."/>
            <person name="Krijgsveld J."/>
            <person name="Heck A.J."/>
            <person name="Mohammed S."/>
        </authorList>
    </citation>
    <scope>IDENTIFICATION BY MASS SPECTROMETRY [LARGE SCALE ANALYSIS]</scope>
</reference>
<reference key="12">
    <citation type="journal article" date="2010" name="Sci. Signal.">
        <title>Quantitative phosphoproteomics reveals widespread full phosphorylation site occupancy during mitosis.</title>
        <authorList>
            <person name="Olsen J.V."/>
            <person name="Vermeulen M."/>
            <person name="Santamaria A."/>
            <person name="Kumar C."/>
            <person name="Miller M.L."/>
            <person name="Jensen L.J."/>
            <person name="Gnad F."/>
            <person name="Cox J."/>
            <person name="Jensen T.S."/>
            <person name="Nigg E.A."/>
            <person name="Brunak S."/>
            <person name="Mann M."/>
        </authorList>
    </citation>
    <scope>PHOSPHORYLATION [LARGE SCALE ANALYSIS] AT SER-268</scope>
    <scope>IDENTIFICATION BY MASS SPECTROMETRY [LARGE SCALE ANALYSIS]</scope>
    <source>
        <tissue>Cervix carcinoma</tissue>
    </source>
</reference>
<reference key="13">
    <citation type="journal article" date="2013" name="J. Proteome Res.">
        <title>Toward a comprehensive characterization of a human cancer cell phosphoproteome.</title>
        <authorList>
            <person name="Zhou H."/>
            <person name="Di Palma S."/>
            <person name="Preisinger C."/>
            <person name="Peng M."/>
            <person name="Polat A.N."/>
            <person name="Heck A.J."/>
            <person name="Mohammed S."/>
        </authorList>
    </citation>
    <scope>PHOSPHORYLATION [LARGE SCALE ANALYSIS] AT SER-256; SER-259; SER-268; SER-316 AND SER-385</scope>
    <scope>IDENTIFICATION BY MASS SPECTROMETRY [LARGE SCALE ANALYSIS]</scope>
    <source>
        <tissue>Cervix carcinoma</tissue>
        <tissue>Erythroleukemia</tissue>
    </source>
</reference>
<reference key="14">
    <citation type="journal article" date="2014" name="J. Proteomics">
        <title>An enzyme assisted RP-RPLC approach for in-depth analysis of human liver phosphoproteome.</title>
        <authorList>
            <person name="Bian Y."/>
            <person name="Song C."/>
            <person name="Cheng K."/>
            <person name="Dong M."/>
            <person name="Wang F."/>
            <person name="Huang J."/>
            <person name="Sun D."/>
            <person name="Wang L."/>
            <person name="Ye M."/>
            <person name="Zou H."/>
        </authorList>
    </citation>
    <scope>PHOSPHORYLATION [LARGE SCALE ANALYSIS] AT SER-259 AND SER-316</scope>
    <scope>IDENTIFICATION BY MASS SPECTROMETRY [LARGE SCALE ANALYSIS]</scope>
    <source>
        <tissue>Liver</tissue>
    </source>
</reference>
<reference key="15">
    <citation type="journal article" date="2012" name="Nat. Genet.">
        <title>Mutations in SLC20A2 link familial idiopathic basal ganglia calcification with phosphate homeostasis.</title>
        <authorList>
            <person name="Wang C."/>
            <person name="Li Y."/>
            <person name="Shi L."/>
            <person name="Ren J."/>
            <person name="Patti M."/>
            <person name="Wang T."/>
            <person name="de Oliveira J.R."/>
            <person name="Sobrido M.J."/>
            <person name="Quintans B."/>
            <person name="Baquero M."/>
            <person name="Cui X."/>
            <person name="Zhang X.Y."/>
            <person name="Wang L."/>
            <person name="Xu H."/>
            <person name="Wang J."/>
            <person name="Yao J."/>
            <person name="Dai X."/>
            <person name="Liu J."/>
            <person name="Zhang L."/>
            <person name="Ma H."/>
            <person name="Gao Y."/>
            <person name="Ma X."/>
            <person name="Feng S."/>
            <person name="Liu M."/>
            <person name="Wang Q.K."/>
            <person name="Forster I.C."/>
            <person name="Zhang X."/>
            <person name="Liu J.Y."/>
        </authorList>
    </citation>
    <scope>VARIANTS IBGC1 VAL-42 DEL; ARG-498; LYS-575; MET-595; TRP-601 AND LEU-601</scope>
    <scope>CHARACTERIZATION OF VARIANTS IBGC1 VAL-42 DEL; ARG-498; LYS-575; MET-595; TRP-601 AND LEU-601</scope>
    <scope>FUNCTION AS SODIUM-PHOSPHATE SYMPORTER</scope>
    <scope>TRANSPORTER ACTIVITY</scope>
</reference>
<reference key="16">
    <citation type="journal article" date="2013" name="Eur. J. Neurol.">
        <title>Reporting a new mutation at the SLC20A2 gene in familial idiopathic basal ganglia calcification.</title>
        <authorList>
            <person name="Lemos R.R."/>
            <person name="Oliveira M.F."/>
            <person name="Oliveira J.R."/>
        </authorList>
    </citation>
    <scope>INVOLVEMENT IN IBGC1</scope>
</reference>
<reference key="17">
    <citation type="journal article" date="2013" name="Gene">
        <title>Novel SLC20A2 mutations identified in southern Chinese patients with idiopathic basal ganglia calcification.</title>
        <authorList>
            <person name="Chen W.J."/>
            <person name="Yao X.P."/>
            <person name="Zhang Q.J."/>
            <person name="Ni W."/>
            <person name="He J."/>
            <person name="Li H.F."/>
            <person name="Liu X.Y."/>
            <person name="Zhao G.X."/>
            <person name="Murong S.X."/>
            <person name="Wang N."/>
            <person name="Wu Z.Y."/>
        </authorList>
    </citation>
    <scope>VARIANTS IBGC1 LEU-11; ASN-28 AND PRO-62</scope>
</reference>
<reference key="18">
    <citation type="journal article" date="2013" name="Neurogenetics">
        <title>Mutations in SLC20A2 are a major cause of familial idiopathic basal ganglia calcification.</title>
        <authorList>
            <person name="Hsu S.C."/>
            <person name="Sears R.L."/>
            <person name="Lemos R.R."/>
            <person name="Quintans B."/>
            <person name="Huang A."/>
            <person name="Spiteri E."/>
            <person name="Nevarez L."/>
            <person name="Mamah C."/>
            <person name="Zatz M."/>
            <person name="Pierce K.D."/>
            <person name="Fullerton J.M."/>
            <person name="Adair J.C."/>
            <person name="Berner J.E."/>
            <person name="Bower M."/>
            <person name="Brodaty H."/>
            <person name="Carmona O."/>
            <person name="Dobricic V."/>
            <person name="Fogel B.L."/>
            <person name="Garcia-Estevez D."/>
            <person name="Goldman J."/>
            <person name="Goudreau J.L."/>
            <person name="Hopfer S."/>
            <person name="Jankovic M."/>
            <person name="Jauma S."/>
            <person name="Jen J.C."/>
            <person name="Kirdlarp S."/>
            <person name="Klepper J."/>
            <person name="Kostic V."/>
            <person name="Lang A.E."/>
            <person name="Linglart A."/>
            <person name="Maisenbacher M.K."/>
            <person name="Manyam B.V."/>
            <person name="Mazzoni P."/>
            <person name="Miedzybrodzka Z."/>
            <person name="Mitarnun W."/>
            <person name="Mitchell P.B."/>
            <person name="Mueller J."/>
            <person name="Novakovic I."/>
            <person name="Paucar M."/>
            <person name="Paulson H."/>
            <person name="Simpson S.A."/>
            <person name="Svenningsson P."/>
            <person name="Tuite P."/>
            <person name="Vitek J."/>
            <person name="Wetchaphanphesat S."/>
            <person name="Williams C."/>
            <person name="Yang M."/>
            <person name="Schofield P.R."/>
            <person name="de Oliveira J.R."/>
            <person name="Sobrido M.J."/>
            <person name="Geschwind D.H."/>
            <person name="Coppola G."/>
        </authorList>
    </citation>
    <scope>VARIANTS IBGC1 GLN-382; GLN-502; LEU-568 AND LEU-601</scope>
</reference>
<reference key="19">
    <citation type="journal article" date="2013" name="Brain">
        <title>Phenotypic spectrum of probable and genetically-confirmed idiopathic basal ganglia calcification.</title>
        <authorList>
            <consortium name="French IBGC Study Group"/>
            <person name="Nicolas G."/>
            <person name="Pottier C."/>
            <person name="Charbonnier C."/>
            <person name="Guyant-Marechal L."/>
            <person name="Le Ber I."/>
            <person name="Pariente J."/>
            <person name="Labauge P."/>
            <person name="Ayrignac X."/>
            <person name="Defebvre L."/>
            <person name="Maltete D."/>
            <person name="Martinaud O."/>
            <person name="Lefaucheur R."/>
            <person name="Guillin O."/>
            <person name="Wallon D."/>
            <person name="Chaumette B."/>
            <person name="Rondepierre P."/>
            <person name="Derache N."/>
            <person name="Fromager G."/>
            <person name="Schaeffer S."/>
            <person name="Krystkowiak P."/>
            <person name="Verny C."/>
            <person name="Jurici S."/>
            <person name="Sauvee M."/>
            <person name="Verin M."/>
            <person name="Lebouvier T."/>
            <person name="Rouaud O."/>
            <person name="Thauvin-Robinet C."/>
            <person name="Rousseau S."/>
            <person name="Rovelet-Lecrux A."/>
            <person name="Frebourg T."/>
            <person name="Campion D."/>
            <person name="Hannequin D."/>
        </authorList>
    </citation>
    <scope>VARIANTS IBGC1 ASN-28; LEU-184; SER-194 AND SER-571</scope>
</reference>
<reference key="20">
    <citation type="journal article" date="2014" name="Mov. Disord.">
        <title>Primary familial brain calcification: Genetic analysis and clinical spectrum.</title>
        <authorList>
            <person name="Taglia I."/>
            <person name="Mignarri A."/>
            <person name="Olgiati S."/>
            <person name="Menci E."/>
            <person name="Petrocelli P.L."/>
            <person name="Breedveld G.J."/>
            <person name="Scaglione C."/>
            <person name="Martinelli P."/>
            <person name="Federico A."/>
            <person name="Bonifati V."/>
            <person name="Dotti M.T."/>
        </authorList>
    </citation>
    <scope>VARIANTS IBGC1 TRP-434 AND MET-595</scope>
</reference>
<reference key="21">
    <citation type="journal article" date="2014" name="Neurology">
        <title>Evaluation of SLC20A2 mutations that cause idiopathic basal ganglia calcification in Japan.</title>
        <authorList>
            <person name="Yamada M."/>
            <person name="Tanaka M."/>
            <person name="Takagi M."/>
            <person name="Kobayashi S."/>
            <person name="Taguchi Y."/>
            <person name="Takashima S."/>
            <person name="Tanaka K."/>
            <person name="Touge T."/>
            <person name="Hatsuta H."/>
            <person name="Murayama S."/>
            <person name="Hayashi Y."/>
            <person name="Kaneko M."/>
            <person name="Ishiura H."/>
            <person name="Mitsui J."/>
            <person name="Atsuta N."/>
            <person name="Sobue G."/>
            <person name="Shimozawa N."/>
            <person name="Inuzuka T."/>
            <person name="Tsuji S."/>
            <person name="Hozumi I."/>
        </authorList>
    </citation>
    <scope>VARIANTS IBGC1 VAL-51; HIS-71; MET-115 AND ARG-637</scope>
</reference>
<reference key="22">
    <citation type="journal article" date="2018" name="J. Cell. Physiol.">
        <title>Primary familial brain calcification with a novel SLC20A2 mutation: Analysis of PiT-2 expression and localization.</title>
        <authorList>
            <person name="Taglia I."/>
            <person name="Formichi P."/>
            <person name="Battisti C."/>
            <person name="Peppoloni G."/>
            <person name="Barghigiani M."/>
            <person name="Tessa A."/>
            <person name="Federico A."/>
        </authorList>
    </citation>
    <scope>CHARACTERIZATION OF VARIANT IBGC1 GLN-PHE-VAL-THR-629 INS</scope>
    <scope>FUNCTION AS SODIUM-PHOSPHATE SYMPORTER</scope>
    <scope>TRANSPORTER ACTIVITY</scope>
    <scope>SUBCELLULAR LOCATION</scope>
</reference>
<reference key="23">
    <citation type="journal article" date="2019" name="Biochem. Biophys. Res. Commun.">
        <title>SLC20A2 variants cause dysfunctional phosphate transport activity in endothelial cells induced from Idiopathic Basal Ganglia Calcification patients-derived iPSCs.</title>
        <authorList>
            <person name="Sekine S.I."/>
            <person name="Nishii K."/>
            <person name="Masaka T."/>
            <person name="Kurita H."/>
            <person name="Inden M."/>
            <person name="Hozumi I."/>
        </authorList>
    </citation>
    <scope>CHARACTERIZATION OF VARIANTS IBGC1 MET-115 AND ARG-637</scope>
    <scope>FUNCTION AS SODIUM-PHOSPHATE SYMPORTER</scope>
    <scope>TRANSPORTER ACTIVITY</scope>
    <scope>SUBCELLULAR LOCATION</scope>
</reference>
<feature type="chain" id="PRO_0000341268" description="Sodium-dependent phosphate transporter 2">
    <location>
        <begin position="1"/>
        <end position="652"/>
    </location>
</feature>
<feature type="topological domain" description="Extracellular" evidence="3">
    <location>
        <begin position="1"/>
        <end position="5"/>
    </location>
</feature>
<feature type="transmembrane region" description="Helical" evidence="3">
    <location>
        <begin position="6"/>
        <end position="26"/>
    </location>
</feature>
<feature type="topological domain" description="Cytoplasmic" evidence="3">
    <location>
        <begin position="27"/>
        <end position="46"/>
    </location>
</feature>
<feature type="transmembrane region" description="Helical" evidence="3">
    <location>
        <begin position="47"/>
        <end position="67"/>
    </location>
</feature>
<feature type="topological domain" description="Extracellular" evidence="3">
    <location>
        <begin position="68"/>
        <end position="86"/>
    </location>
</feature>
<feature type="transmembrane region" description="Helical" evidence="3">
    <location>
        <begin position="87"/>
        <end position="107"/>
    </location>
</feature>
<feature type="topological domain" description="Cytoplasmic" evidence="3">
    <location>
        <begin position="108"/>
        <end position="109"/>
    </location>
</feature>
<feature type="transmembrane region" description="Helical" evidence="3">
    <location>
        <begin position="110"/>
        <end position="130"/>
    </location>
</feature>
<feature type="topological domain" description="Extracellular" evidence="3">
    <location>
        <begin position="131"/>
        <end position="142"/>
    </location>
</feature>
<feature type="transmembrane region" description="Helical" evidence="3">
    <location>
        <begin position="143"/>
        <end position="163"/>
    </location>
</feature>
<feature type="topological domain" description="Cytoplasmic" evidence="3">
    <location>
        <begin position="164"/>
        <end position="190"/>
    </location>
</feature>
<feature type="transmembrane region" description="Helical" evidence="3">
    <location>
        <begin position="191"/>
        <end position="211"/>
    </location>
</feature>
<feature type="topological domain" description="Extracellular" evidence="3">
    <location>
        <begin position="212"/>
        <end position="213"/>
    </location>
</feature>
<feature type="transmembrane region" description="Helical" evidence="3">
    <location>
        <begin position="214"/>
        <end position="234"/>
    </location>
</feature>
<feature type="topological domain" description="Cytoplasmic" evidence="3">
    <location>
        <begin position="235"/>
        <end position="482"/>
    </location>
</feature>
<feature type="transmembrane region" description="Helical" evidence="3">
    <location>
        <begin position="483"/>
        <end position="503"/>
    </location>
</feature>
<feature type="topological domain" description="Extracellular" evidence="3">
    <location>
        <begin position="504"/>
        <end position="530"/>
    </location>
</feature>
<feature type="transmembrane region" description="Helical" evidence="3">
    <location>
        <begin position="531"/>
        <end position="551"/>
    </location>
</feature>
<feature type="topological domain" description="Cytoplasmic" evidence="3">
    <location>
        <begin position="552"/>
        <end position="571"/>
    </location>
</feature>
<feature type="transmembrane region" description="Helical" evidence="3">
    <location>
        <begin position="572"/>
        <end position="586"/>
    </location>
</feature>
<feature type="topological domain" description="Extracellular" evidence="3">
    <location>
        <begin position="587"/>
        <end position="593"/>
    </location>
</feature>
<feature type="transmembrane region" description="Helical" evidence="3">
    <location>
        <begin position="594"/>
        <end position="609"/>
    </location>
</feature>
<feature type="topological domain" description="Cytoplasmic" evidence="3">
    <location>
        <begin position="610"/>
        <end position="621"/>
    </location>
</feature>
<feature type="transmembrane region" description="Helical" evidence="3">
    <location>
        <begin position="622"/>
        <end position="642"/>
    </location>
</feature>
<feature type="topological domain" description="Extracellular" evidence="3">
    <location>
        <begin position="643"/>
        <end position="652"/>
    </location>
</feature>
<feature type="region of interest" description="Disordered" evidence="4">
    <location>
        <begin position="273"/>
        <end position="307"/>
    </location>
</feature>
<feature type="region of interest" description="Disordered" evidence="4">
    <location>
        <begin position="458"/>
        <end position="477"/>
    </location>
</feature>
<feature type="compositionally biased region" description="Polar residues" evidence="4">
    <location>
        <begin position="295"/>
        <end position="304"/>
    </location>
</feature>
<feature type="modified residue" description="Phosphoserine" evidence="1">
    <location>
        <position position="253"/>
    </location>
</feature>
<feature type="modified residue" description="Phosphoserine" evidence="24">
    <location>
        <position position="256"/>
    </location>
</feature>
<feature type="modified residue" description="Phosphoserine" evidence="24 25">
    <location>
        <position position="259"/>
    </location>
</feature>
<feature type="modified residue" description="Phosphoserine" evidence="23 24">
    <location>
        <position position="268"/>
    </location>
</feature>
<feature type="modified residue" description="Phosphoserine" evidence="24 25">
    <location>
        <position position="316"/>
    </location>
</feature>
<feature type="modified residue" description="Phosphoserine" evidence="24">
    <location>
        <position position="385"/>
    </location>
</feature>
<feature type="glycosylation site" description="N-linked (GlcNAc...) asparagine" evidence="5">
    <location>
        <position position="81"/>
    </location>
</feature>
<feature type="sequence variant" id="VAR_072255" description="In IBGC1; dbSNP:rs201836672." evidence="14">
    <original>I</original>
    <variation>L</variation>
    <location>
        <position position="11"/>
    </location>
</feature>
<feature type="sequence variant" id="VAR_072256" description="In IBGC1; Impairs phosphate transport; no effect on retroviral receptor function; dbSNP:rs1554561099." evidence="8 14 15">
    <original>D</original>
    <variation>N</variation>
    <location>
        <position position="28"/>
    </location>
</feature>
<feature type="sequence variant" id="VAR_067545" description="In IBGC1; substantially impaired phosphate transport." evidence="11">
    <location>
        <position position="42"/>
    </location>
</feature>
<feature type="sequence variant" id="VAR_072257" description="In IBGC1." evidence="16">
    <original>A</original>
    <variation>V</variation>
    <location>
        <position position="51"/>
    </location>
</feature>
<feature type="sequence variant" id="VAR_072258" description="In IBGC1." evidence="14">
    <original>L</original>
    <variation>P</variation>
    <location>
        <position position="62"/>
    </location>
</feature>
<feature type="sequence variant" id="VAR_072259" description="In IBGC1." evidence="16">
    <original>R</original>
    <variation>H</variation>
    <location>
        <position position="71"/>
    </location>
</feature>
<feature type="sequence variant" id="VAR_072260" description="In IBGC1; loss of sodium-dependent phosphate transport but no effect on cell membrane localization; dbSNP:rs775911275." evidence="16 19">
    <original>T</original>
    <variation>M</variation>
    <location>
        <position position="115"/>
    </location>
</feature>
<feature type="sequence variant" id="VAR_075396" description="In IBGC1; uncertain significance." evidence="15">
    <original>P</original>
    <variation>L</variation>
    <location>
        <position position="184"/>
    </location>
</feature>
<feature type="sequence variant" id="VAR_075397" description="In IBGC1; uncertain significance; dbSNP:rs748252183." evidence="15">
    <original>N</original>
    <variation>S</variation>
    <location>
        <position position="194"/>
    </location>
</feature>
<feature type="sequence variant" id="VAR_072261" description="In IBGC1; dbSNP:rs200010919." evidence="12">
    <original>R</original>
    <variation>Q</variation>
    <location>
        <position position="382"/>
    </location>
</feature>
<feature type="sequence variant" id="VAR_072262" description="In IBGC1; dbSNP:rs1357615935." evidence="17">
    <original>S</original>
    <variation>W</variation>
    <location>
        <position position="434"/>
    </location>
</feature>
<feature type="sequence variant" id="VAR_067546" description="In IBGC1; substantially impaired phosphate transport." evidence="11">
    <original>G</original>
    <variation>R</variation>
    <location>
        <position position="498"/>
    </location>
</feature>
<feature type="sequence variant" id="VAR_072263" description="In IBGC1." evidence="12">
    <original>H</original>
    <variation>Q</variation>
    <location>
        <position position="502"/>
    </location>
</feature>
<feature type="sequence variant" id="VAR_072264" description="In IBGC1; dbSNP:rs763252801." evidence="12">
    <original>P</original>
    <variation>L</variation>
    <location>
        <position position="568"/>
    </location>
</feature>
<feature type="sequence variant" id="VAR_075398" description="In IBGC1; dbSNP:rs1388992742." evidence="15">
    <original>G</original>
    <variation>S</variation>
    <location>
        <position position="571"/>
    </location>
</feature>
<feature type="sequence variant" id="VAR_067547" description="In IBGC1; substantially impaired phosphate transport; dbSNP:rs387906653." evidence="11">
    <original>E</original>
    <variation>K</variation>
    <location>
        <position position="575"/>
    </location>
</feature>
<feature type="sequence variant" id="VAR_067548" description="In IBGC1; substantially impaired phosphate transport; dbSNP:rs387906654." evidence="11 17">
    <original>T</original>
    <variation>M</variation>
    <location>
        <position position="595"/>
    </location>
</feature>
<feature type="sequence variant" id="VAR_067549" description="In IBGC1; substantially impaired phosphate transport; dbSNP:rs387906652." evidence="11 12">
    <original>S</original>
    <variation>L</variation>
    <location>
        <position position="601"/>
    </location>
</feature>
<feature type="sequence variant" id="VAR_067550" description="In IBGC1; substantially impaired phosphate transport; dbSNP:rs387906652." evidence="11">
    <original>S</original>
    <variation>W</variation>
    <location>
        <position position="601"/>
    </location>
</feature>
<feature type="sequence variant" id="VAR_088078" description="In IBGC1; uncertain significance; reduced sodium-dependent phosphate transport and cell membrane localization." evidence="18">
    <original>T</original>
    <variation>TWFVT</variation>
    <location>
        <position position="629"/>
    </location>
</feature>
<feature type="sequence variant" id="VAR_072265" description="In IBGC1; loss of sodium-dependent phosphate transport but no effect on cell membrane localization." evidence="16 19">
    <original>S</original>
    <variation>R</variation>
    <location>
        <position position="637"/>
    </location>
</feature>
<feature type="mutagenesis site" description="Abolishes sodium-dependent phosphate transport; no effect on retroviral receptor function." evidence="7 9">
    <original>E</original>
    <variation>D</variation>
    <variation>K</variation>
    <location>
        <position position="55"/>
    </location>
</feature>
<feature type="mutagenesis site" description="Abolishes phosphate but not sodium uptake; when associated with Q-91 and Q-575." evidence="7 9">
    <original>E</original>
    <variation>Q</variation>
    <location>
        <position position="55"/>
    </location>
</feature>
<feature type="mutagenesis site" description="Abolishes N-glycosylation." evidence="5">
    <original>N</original>
    <variation>V</variation>
    <location>
        <position position="81"/>
    </location>
</feature>
<feature type="mutagenesis site" description="Abolishes phosphate but not sodium uptake; when associated with Q-55 and Q-575." evidence="9">
    <original>E</original>
    <variation>Q</variation>
    <location>
        <position position="91"/>
    </location>
</feature>
<feature type="mutagenesis site" description="Impairs phosphate transport; no effect on retroviral receptor function." evidence="8">
    <original>D</original>
    <variation>N</variation>
    <location>
        <position position="506"/>
    </location>
</feature>
<feature type="mutagenesis site" description="Abolishes sodium-dependent phosphate transport; no effect on retroviral receptor function." evidence="7 9">
    <original>E</original>
    <variation>D</variation>
    <variation>K</variation>
    <location>
        <position position="575"/>
    </location>
</feature>
<feature type="mutagenesis site" description="Abolishes phosphate but not sodium uptake; when associated with Q-55 and Q-91." evidence="7 9">
    <original>E</original>
    <variation>Q</variation>
    <location>
        <position position="575"/>
    </location>
</feature>
<accession>Q08357</accession>
<proteinExistence type="evidence at protein level"/>
<keyword id="KW-1003">Cell membrane</keyword>
<keyword id="KW-0225">Disease variant</keyword>
<keyword id="KW-0325">Glycoprotein</keyword>
<keyword id="KW-1183">Host cell receptor for virus entry</keyword>
<keyword id="KW-0945">Host-virus interaction</keyword>
<keyword id="KW-0406">Ion transport</keyword>
<keyword id="KW-0472">Membrane</keyword>
<keyword id="KW-0592">Phosphate transport</keyword>
<keyword id="KW-0597">Phosphoprotein</keyword>
<keyword id="KW-1267">Proteomics identification</keyword>
<keyword id="KW-0675">Receptor</keyword>
<keyword id="KW-1185">Reference proteome</keyword>
<keyword id="KW-0915">Sodium</keyword>
<keyword id="KW-0739">Sodium transport</keyword>
<keyword id="KW-0769">Symport</keyword>
<keyword id="KW-0812">Transmembrane</keyword>
<keyword id="KW-1133">Transmembrane helix</keyword>
<keyword id="KW-0813">Transport</keyword>
<comment type="function">
    <text evidence="2 7 8 9 10 11 18 19">Sodium-phosphate symporter which preferentially transports the monovalent form of phosphate with a stoichiometry of two sodium ions per phosphate ion (PubMed:12205090, PubMed:15955065, PubMed:16790504, PubMed:17494632, PubMed:22327515, PubMed:28722801, PubMed:30704756). Plays a critical role in the determination of bone quality and strength by providing phosphate for bone mineralization (By similarity). Required to maintain normal cerebrospinal fluid phosphate levels (By similarity). Mediates phosphate-induced calcification of vascular smooth muscle cells (VCMCs) and can functionally compensate for loss of SLC20A1 in VCMCs (By similarity).</text>
</comment>
<comment type="function">
    <text evidence="6 7 8 20">(Microbial infection) Functions as a retroviral receptor and confers human cells susceptibility to infection to amphotropic murine leukemia virus (A-MuLV), 10A1 murine leukemia virus (10A1 MLV) and some feline leukemia virus subgroup B (FeLV-B) variants.</text>
</comment>
<comment type="catalytic activity">
    <reaction evidence="7 8 9 10 11 18 19">
        <text>2 Na(+)(out) + phosphate(out) = 2 Na(+)(in) + phosphate(in)</text>
        <dbReference type="Rhea" id="RHEA:71259"/>
        <dbReference type="ChEBI" id="CHEBI:29101"/>
        <dbReference type="ChEBI" id="CHEBI:43474"/>
    </reaction>
</comment>
<comment type="biophysicochemical properties">
    <kinetics>
        <KM evidence="9">163.5 uM for phosphate</KM>
    </kinetics>
</comment>
<comment type="subunit">
    <text evidence="7 8">Homodimer.</text>
</comment>
<comment type="subcellular location">
    <subcellularLocation>
        <location evidence="18 19 21">Cell membrane</location>
        <topology evidence="21">Multi-pass membrane protein</topology>
    </subcellularLocation>
    <subcellularLocation>
        <location evidence="1">Apical cell membrane</location>
        <topology evidence="3">Multi-pass membrane protein</topology>
    </subcellularLocation>
</comment>
<comment type="tissue specificity">
    <text>Ubiquitously expressed.</text>
</comment>
<comment type="induction">
    <text evidence="21">Increased by phosphate depletion in osteosarcoma cell lines.</text>
</comment>
<comment type="disease" evidence="8 11 12 13 14 15 16 17 18 19">
    <disease id="DI-03407">
        <name>Basal ganglia calcification, idiopathic, 1</name>
        <acronym>IBGC1</acronym>
        <description>A form of basal ganglia calcification, an autosomal dominant condition characterized by symmetric calcification in the basal ganglia and other brain regions. Affected individuals can either be asymptomatic or show a wide spectrum of neuropsychiatric symptoms, including parkinsonism, dystonia, tremor, ataxia, dementia, psychosis, seizures, and chronic headache. Serum levels of calcium, phosphate, alkaline phosphatase and parathyroid hormone are normal. The neuropathological hallmark of the disease is vascular and pericapillary calcification, mainly of calcium phosphate, in the affected brain areas.</description>
        <dbReference type="MIM" id="213600"/>
    </disease>
    <text>The disease is caused by variants affecting the gene represented in this entry.</text>
</comment>
<comment type="similarity">
    <text evidence="22">Belongs to the inorganic phosphate transporter (PiT) (TC 2.A.20) family.</text>
</comment>
<sequence length="652" mass="70392">MAMDEYLWMVILGFIIAFILAFSVGANDVANSFGTAVGSGVVTLRQACILASIFETTGSVLLGAKVGETIRKGIIDVNLYNETVETLMAGEVSAMVGSAVWQLIASFLRLPISGTHCIVGSTIGFSLVAIGTKGVQWMELVKIVASWFISPLLSGFMSGLLFVLIRIFILKKEDPVPNGLRALPVFYAATIAINVFSIMYTGAPVLGLVLPMWAIALISFGVALLFAFFVWLFVCPWMRRKITGKLQKEGALSRVSDESLSKVQEAESPVFKELPGAKANDDSTIPLTGAAGETLGTSEGTSAGSHPRAAYGRALSMTHGSVKSPISNGTFGFDGHTRSDGHVYHTVHKDSGLYKDLLHKIHIDRGPEEKPAQESNYRLLRRNNSYTCYTAAICGLPVHATFRAADSSAPEDSEKLVGDTVSYSKKRLRYDSYSSYCNAVAEAEIEAEEGGVEMKLASELADPDQPREDPAEEEKEEKDAPEVHLLFHFLQVLTACFGSFAHGGNDVSNAIGPLVALWLIYKQGGVTQEAATPVWLLFYGGVGICTGLWVWGRRVIQTMGKDLTPITPSSGFTIELASAFTVVIASNIGLPVSTTHCKVGSVVAVGWIRSRKAVDWRLFRNIFVAWFVTVPVAGLFSAAVMALLMYGILPYV</sequence>
<name>S20A2_HUMAN</name>
<protein>
    <recommendedName>
        <fullName>Sodium-dependent phosphate transporter 2</fullName>
    </recommendedName>
    <alternativeName>
        <fullName>Gibbon ape leukemia virus receptor 2</fullName>
        <shortName>GLVR-2</shortName>
    </alternativeName>
    <alternativeName>
        <fullName>Phosphate transporter 2</fullName>
        <shortName>PiT-2</shortName>
        <shortName>Pit2</shortName>
        <shortName>hPit2</shortName>
    </alternativeName>
    <alternativeName>
        <fullName>Solute carrier family 20 member 2</fullName>
    </alternativeName>
</protein>